<name>SYI_HALWD</name>
<feature type="chain" id="PRO_1000022149" description="Isoleucine--tRNA ligase">
    <location>
        <begin position="1"/>
        <end position="1059"/>
    </location>
</feature>
<feature type="short sequence motif" description="'HIGH' region">
    <location>
        <begin position="47"/>
        <end position="57"/>
    </location>
</feature>
<feature type="short sequence motif" description="'KMSKS' region">
    <location>
        <begin position="606"/>
        <end position="610"/>
    </location>
</feature>
<feature type="binding site" evidence="1">
    <location>
        <position position="609"/>
    </location>
    <ligand>
        <name>ATP</name>
        <dbReference type="ChEBI" id="CHEBI:30616"/>
    </ligand>
</feature>
<gene>
    <name evidence="1" type="primary">ileS</name>
    <name type="ordered locus">HQ_2671A</name>
</gene>
<dbReference type="EC" id="6.1.1.5" evidence="1"/>
<dbReference type="EMBL" id="AM180088">
    <property type="protein sequence ID" value="CAJ52782.1"/>
    <property type="molecule type" value="Genomic_DNA"/>
</dbReference>
<dbReference type="RefSeq" id="WP_011571898.1">
    <property type="nucleotide sequence ID" value="NC_008212.1"/>
</dbReference>
<dbReference type="SMR" id="Q18GW3"/>
<dbReference type="STRING" id="362976.HQ_2671A"/>
<dbReference type="GeneID" id="4194153"/>
<dbReference type="KEGG" id="hwa:HQ_2671A"/>
<dbReference type="eggNOG" id="arCOG00807">
    <property type="taxonomic scope" value="Archaea"/>
</dbReference>
<dbReference type="HOGENOM" id="CLU_001493_1_1_2"/>
<dbReference type="Proteomes" id="UP000001975">
    <property type="component" value="Chromosome"/>
</dbReference>
<dbReference type="GO" id="GO:0005737">
    <property type="term" value="C:cytoplasm"/>
    <property type="evidence" value="ECO:0007669"/>
    <property type="project" value="UniProtKB-SubCell"/>
</dbReference>
<dbReference type="GO" id="GO:0002161">
    <property type="term" value="F:aminoacyl-tRNA deacylase activity"/>
    <property type="evidence" value="ECO:0007669"/>
    <property type="project" value="InterPro"/>
</dbReference>
<dbReference type="GO" id="GO:0005524">
    <property type="term" value="F:ATP binding"/>
    <property type="evidence" value="ECO:0007669"/>
    <property type="project" value="UniProtKB-UniRule"/>
</dbReference>
<dbReference type="GO" id="GO:0004822">
    <property type="term" value="F:isoleucine-tRNA ligase activity"/>
    <property type="evidence" value="ECO:0007669"/>
    <property type="project" value="UniProtKB-UniRule"/>
</dbReference>
<dbReference type="GO" id="GO:0000049">
    <property type="term" value="F:tRNA binding"/>
    <property type="evidence" value="ECO:0007669"/>
    <property type="project" value="InterPro"/>
</dbReference>
<dbReference type="GO" id="GO:0008270">
    <property type="term" value="F:zinc ion binding"/>
    <property type="evidence" value="ECO:0007669"/>
    <property type="project" value="UniProtKB-UniRule"/>
</dbReference>
<dbReference type="GO" id="GO:0006428">
    <property type="term" value="P:isoleucyl-tRNA aminoacylation"/>
    <property type="evidence" value="ECO:0007669"/>
    <property type="project" value="UniProtKB-UniRule"/>
</dbReference>
<dbReference type="CDD" id="cd07961">
    <property type="entry name" value="Anticodon_Ia_Ile_ABEc"/>
    <property type="match status" value="1"/>
</dbReference>
<dbReference type="CDD" id="cd00818">
    <property type="entry name" value="IleRS_core"/>
    <property type="match status" value="1"/>
</dbReference>
<dbReference type="FunFam" id="3.40.50.620:FF:000286">
    <property type="entry name" value="Isoleucine--tRNA ligase"/>
    <property type="match status" value="1"/>
</dbReference>
<dbReference type="Gene3D" id="3.40.50.620">
    <property type="entry name" value="HUPs"/>
    <property type="match status" value="2"/>
</dbReference>
<dbReference type="Gene3D" id="1.10.730.10">
    <property type="entry name" value="Isoleucyl-tRNA Synthetase, Domain 1"/>
    <property type="match status" value="1"/>
</dbReference>
<dbReference type="HAMAP" id="MF_02003">
    <property type="entry name" value="Ile_tRNA_synth_type2"/>
    <property type="match status" value="1"/>
</dbReference>
<dbReference type="InterPro" id="IPR001412">
    <property type="entry name" value="aa-tRNA-synth_I_CS"/>
</dbReference>
<dbReference type="InterPro" id="IPR002300">
    <property type="entry name" value="aa-tRNA-synth_Ia"/>
</dbReference>
<dbReference type="InterPro" id="IPR033709">
    <property type="entry name" value="Anticodon_Ile_ABEc"/>
</dbReference>
<dbReference type="InterPro" id="IPR002301">
    <property type="entry name" value="Ile-tRNA-ligase"/>
</dbReference>
<dbReference type="InterPro" id="IPR023586">
    <property type="entry name" value="Ile-tRNA-ligase_type2"/>
</dbReference>
<dbReference type="InterPro" id="IPR013155">
    <property type="entry name" value="M/V/L/I-tRNA-synth_anticd-bd"/>
</dbReference>
<dbReference type="InterPro" id="IPR014729">
    <property type="entry name" value="Rossmann-like_a/b/a_fold"/>
</dbReference>
<dbReference type="InterPro" id="IPR009080">
    <property type="entry name" value="tRNAsynth_Ia_anticodon-bd"/>
</dbReference>
<dbReference type="InterPro" id="IPR009008">
    <property type="entry name" value="Val/Leu/Ile-tRNA-synth_edit"/>
</dbReference>
<dbReference type="NCBIfam" id="TIGR00392">
    <property type="entry name" value="ileS"/>
    <property type="match status" value="1"/>
</dbReference>
<dbReference type="PANTHER" id="PTHR42780:SF1">
    <property type="entry name" value="ISOLEUCINE--TRNA LIGASE, CYTOPLASMIC"/>
    <property type="match status" value="1"/>
</dbReference>
<dbReference type="PANTHER" id="PTHR42780">
    <property type="entry name" value="SOLEUCYL-TRNA SYNTHETASE"/>
    <property type="match status" value="1"/>
</dbReference>
<dbReference type="Pfam" id="PF08264">
    <property type="entry name" value="Anticodon_1"/>
    <property type="match status" value="1"/>
</dbReference>
<dbReference type="Pfam" id="PF19302">
    <property type="entry name" value="DUF5915"/>
    <property type="match status" value="1"/>
</dbReference>
<dbReference type="Pfam" id="PF00133">
    <property type="entry name" value="tRNA-synt_1"/>
    <property type="match status" value="1"/>
</dbReference>
<dbReference type="PRINTS" id="PR00984">
    <property type="entry name" value="TRNASYNTHILE"/>
</dbReference>
<dbReference type="SUPFAM" id="SSF47323">
    <property type="entry name" value="Anticodon-binding domain of a subclass of class I aminoacyl-tRNA synthetases"/>
    <property type="match status" value="1"/>
</dbReference>
<dbReference type="SUPFAM" id="SSF52374">
    <property type="entry name" value="Nucleotidylyl transferase"/>
    <property type="match status" value="1"/>
</dbReference>
<dbReference type="SUPFAM" id="SSF50677">
    <property type="entry name" value="ValRS/IleRS/LeuRS editing domain"/>
    <property type="match status" value="1"/>
</dbReference>
<dbReference type="PROSITE" id="PS00178">
    <property type="entry name" value="AA_TRNA_LIGASE_I"/>
    <property type="match status" value="1"/>
</dbReference>
<sequence>MDEVDDQYTPADVETAIETYWDDTNAYEATKEAHADDPSFFFVDGPPYTSGQMHLGTAWNKTLKDAIIRYKRMTGHHVTDRPGYDMHGLPIEVKVEEELGFETKRDIEEYGMESFIEECKRFAVDNRKAMDEDFQSIGVWMDWDNPYETLSPEYMEAAWWAFQQVDDRGLVERGKRSVSYCPRCQTAIAANEVEYDEITSPSIYVRFPLSNKEGSLVIWTTTPWTIPANTFVAVDKDLTYQAVRAEQGDDSEVLYIAESCVEDVLKQGRYDDYTVVEEYSGDELTGWEYDHPLADQVQTYADFAGAGEVYTAEYVEADRTGLVHSAPGHGQEDFARGQELDLETFVPVDGRGEFTEAAGQYTGTFVRDANDEIINDLDEEGVLLSSGTHEHRYGHCWRCDTDIIFLATDQWFITVTDIKDELLDNINDSEWYPQWARDNRFRDFVADAPDWNVSRQRYWGIPLPIWESVDDADTGDNSTSDDWIVIGTREELAERADQDVNPAEIDLHRPAVDPLTITENGSRYERVPDVFDVWIDSSVASWGTIDYPGETDAYDELWPADFIVEAHDQTRGWFWSQLGMGTAATGQVPYEEVMMHGFANDENGRKMSKSRGNIVTPEEAIDRAGRDPLRAYLLSHDQQGVDLSFEWDGLGEMQSTLNIFWNVFRFPLPYMDLDGYDPATADLSEGSMNIVDEWVLSRLQSVKATTRAAWEEYEIDTAVNTILEFITDDVSRFYIKAIRERMWADEDSASKRGAYATLSTVLDETIRLLAPIAPYLTEQMYQHLNGSETTVHALSYPSVDPEWQNETLESEMAVLRDVEEAAANARQQGGRKLRWPVPRVIVEAEDDSIADAVESLSGLLADRVNTEAIETVTQFDELIERAQPEMSVIGPEFGADAQRVMDAIEGGSREILTEGVTIDGVQYEITDEMITFDAEPPAYISAADFDGGTVYVDTSLTESIEAEGYARDVIRRIQQMRKELALDVDTEIQTAVDVADDRVADLVAQQRDVVATETRTNAFVDNIDRASENGQALIEEWDVEGVTVTIGVAPLKAQLSDQS</sequence>
<reference key="1">
    <citation type="journal article" date="2006" name="BMC Genomics">
        <title>The genome of the square archaeon Haloquadratum walsbyi: life at the limits of water activity.</title>
        <authorList>
            <person name="Bolhuis H."/>
            <person name="Palm P."/>
            <person name="Wende A."/>
            <person name="Falb M."/>
            <person name="Rampp M."/>
            <person name="Rodriguez-Valera F."/>
            <person name="Pfeiffer F."/>
            <person name="Oesterhelt D."/>
        </authorList>
    </citation>
    <scope>NUCLEOTIDE SEQUENCE [LARGE SCALE GENOMIC DNA]</scope>
    <source>
        <strain>DSM 16790 / HBSQ001</strain>
    </source>
</reference>
<keyword id="KW-0030">Aminoacyl-tRNA synthetase</keyword>
<keyword id="KW-0067">ATP-binding</keyword>
<keyword id="KW-0963">Cytoplasm</keyword>
<keyword id="KW-0436">Ligase</keyword>
<keyword id="KW-0479">Metal-binding</keyword>
<keyword id="KW-0547">Nucleotide-binding</keyword>
<keyword id="KW-0648">Protein biosynthesis</keyword>
<keyword id="KW-1185">Reference proteome</keyword>
<keyword id="KW-0862">Zinc</keyword>
<accession>Q18GW3</accession>
<comment type="function">
    <text evidence="1">Catalyzes the attachment of isoleucine to tRNA(Ile). As IleRS can inadvertently accommodate and process structurally similar amino acids such as valine, to avoid such errors it has two additional distinct tRNA(Ile)-dependent editing activities. One activity is designated as 'pretransfer' editing and involves the hydrolysis of activated Val-AMP. The other activity is designated 'posttransfer' editing and involves deacylation of mischarged Val-tRNA(Ile).</text>
</comment>
<comment type="catalytic activity">
    <reaction evidence="1">
        <text>tRNA(Ile) + L-isoleucine + ATP = L-isoleucyl-tRNA(Ile) + AMP + diphosphate</text>
        <dbReference type="Rhea" id="RHEA:11060"/>
        <dbReference type="Rhea" id="RHEA-COMP:9666"/>
        <dbReference type="Rhea" id="RHEA-COMP:9695"/>
        <dbReference type="ChEBI" id="CHEBI:30616"/>
        <dbReference type="ChEBI" id="CHEBI:33019"/>
        <dbReference type="ChEBI" id="CHEBI:58045"/>
        <dbReference type="ChEBI" id="CHEBI:78442"/>
        <dbReference type="ChEBI" id="CHEBI:78528"/>
        <dbReference type="ChEBI" id="CHEBI:456215"/>
        <dbReference type="EC" id="6.1.1.5"/>
    </reaction>
</comment>
<comment type="cofactor">
    <cofactor evidence="1">
        <name>Zn(2+)</name>
        <dbReference type="ChEBI" id="CHEBI:29105"/>
    </cofactor>
</comment>
<comment type="subunit">
    <text evidence="1">Monomer.</text>
</comment>
<comment type="subcellular location">
    <subcellularLocation>
        <location evidence="1">Cytoplasm</location>
    </subcellularLocation>
</comment>
<comment type="domain">
    <text evidence="1">IleRS has two distinct active sites: one for aminoacylation and one for editing. The misactivated valine is translocated from the active site to the editing site, which sterically excludes the correctly activated isoleucine. The single editing site contains two valyl binding pockets, one specific for each substrate (Val-AMP or Val-tRNA(Ile)).</text>
</comment>
<comment type="similarity">
    <text evidence="1">Belongs to the class-I aminoacyl-tRNA synthetase family. IleS type 2 subfamily.</text>
</comment>
<protein>
    <recommendedName>
        <fullName evidence="1">Isoleucine--tRNA ligase</fullName>
        <ecNumber evidence="1">6.1.1.5</ecNumber>
    </recommendedName>
    <alternativeName>
        <fullName evidence="1">Isoleucyl-tRNA synthetase</fullName>
        <shortName evidence="1">IleRS</shortName>
    </alternativeName>
</protein>
<organism>
    <name type="scientific">Haloquadratum walsbyi (strain DSM 16790 / HBSQ001)</name>
    <dbReference type="NCBI Taxonomy" id="362976"/>
    <lineage>
        <taxon>Archaea</taxon>
        <taxon>Methanobacteriati</taxon>
        <taxon>Methanobacteriota</taxon>
        <taxon>Stenosarchaea group</taxon>
        <taxon>Halobacteria</taxon>
        <taxon>Halobacteriales</taxon>
        <taxon>Haloferacaceae</taxon>
        <taxon>Haloquadratum</taxon>
    </lineage>
</organism>
<proteinExistence type="inferred from homology"/>
<evidence type="ECO:0000255" key="1">
    <source>
        <dbReference type="HAMAP-Rule" id="MF_02003"/>
    </source>
</evidence>